<proteinExistence type="inferred from homology"/>
<sequence>MDEKIETRLIGATVQSNEPDLERSIRPKRLSDYIGQAAVREQMDIFIRAATNRREALDHVLIFGPPGLGKTTLAHIIAHEMQAGLKQTSGPVLEKAGDLAALLTNLEPHDVLFIDEIHRLNPAIEEVLYPALEDFQLDIIIGEGPSARSIKLDLPPFTLVGATTRAGLLTSPLRDRFGIVQRLEFYRIPDLIHIVKRAAHILNVVIDENGAGEIARRSRGTPRIANRLLRRVRDFAEVRANGMINESIAKEALDLLNVDIRGLDVMDRKLLETIIKKFQGGPVGIESLAAAISEERGTIEDVIEPYLIQEGFILRTPRGRIATELTYQHFKLPLPTQSTLQENFDLLGKVE</sequence>
<gene>
    <name evidence="1" type="primary">ruvB</name>
    <name type="ordered locus">CbuK_1798</name>
</gene>
<protein>
    <recommendedName>
        <fullName evidence="1">Holliday junction branch migration complex subunit RuvB</fullName>
        <ecNumber evidence="1">3.6.4.-</ecNumber>
    </recommendedName>
</protein>
<name>RUVB_COXB1</name>
<organism>
    <name type="scientific">Coxiella burnetii (strain CbuK_Q154)</name>
    <name type="common">Coxiella burnetii (strain Q154)</name>
    <dbReference type="NCBI Taxonomy" id="434924"/>
    <lineage>
        <taxon>Bacteria</taxon>
        <taxon>Pseudomonadati</taxon>
        <taxon>Pseudomonadota</taxon>
        <taxon>Gammaproteobacteria</taxon>
        <taxon>Legionellales</taxon>
        <taxon>Coxiellaceae</taxon>
        <taxon>Coxiella</taxon>
    </lineage>
</organism>
<accession>B6J507</accession>
<feature type="chain" id="PRO_1000089635" description="Holliday junction branch migration complex subunit RuvB">
    <location>
        <begin position="1"/>
        <end position="351"/>
    </location>
</feature>
<feature type="region of interest" description="Large ATPase domain (RuvB-L)" evidence="1">
    <location>
        <begin position="1"/>
        <end position="186"/>
    </location>
</feature>
<feature type="region of interest" description="Small ATPAse domain (RuvB-S)" evidence="1">
    <location>
        <begin position="187"/>
        <end position="257"/>
    </location>
</feature>
<feature type="region of interest" description="Head domain (RuvB-H)" evidence="1">
    <location>
        <begin position="260"/>
        <end position="351"/>
    </location>
</feature>
<feature type="binding site" evidence="1">
    <location>
        <position position="25"/>
    </location>
    <ligand>
        <name>ATP</name>
        <dbReference type="ChEBI" id="CHEBI:30616"/>
    </ligand>
</feature>
<feature type="binding site" evidence="1">
    <location>
        <position position="26"/>
    </location>
    <ligand>
        <name>ATP</name>
        <dbReference type="ChEBI" id="CHEBI:30616"/>
    </ligand>
</feature>
<feature type="binding site" evidence="1">
    <location>
        <position position="67"/>
    </location>
    <ligand>
        <name>ATP</name>
        <dbReference type="ChEBI" id="CHEBI:30616"/>
    </ligand>
</feature>
<feature type="binding site" evidence="1">
    <location>
        <position position="70"/>
    </location>
    <ligand>
        <name>ATP</name>
        <dbReference type="ChEBI" id="CHEBI:30616"/>
    </ligand>
</feature>
<feature type="binding site" evidence="1">
    <location>
        <position position="71"/>
    </location>
    <ligand>
        <name>ATP</name>
        <dbReference type="ChEBI" id="CHEBI:30616"/>
    </ligand>
</feature>
<feature type="binding site" evidence="1">
    <location>
        <position position="71"/>
    </location>
    <ligand>
        <name>Mg(2+)</name>
        <dbReference type="ChEBI" id="CHEBI:18420"/>
    </ligand>
</feature>
<feature type="binding site" evidence="1">
    <location>
        <position position="72"/>
    </location>
    <ligand>
        <name>ATP</name>
        <dbReference type="ChEBI" id="CHEBI:30616"/>
    </ligand>
</feature>
<feature type="binding site" evidence="1">
    <location>
        <begin position="133"/>
        <end position="135"/>
    </location>
    <ligand>
        <name>ATP</name>
        <dbReference type="ChEBI" id="CHEBI:30616"/>
    </ligand>
</feature>
<feature type="binding site" evidence="1">
    <location>
        <position position="176"/>
    </location>
    <ligand>
        <name>ATP</name>
        <dbReference type="ChEBI" id="CHEBI:30616"/>
    </ligand>
</feature>
<feature type="binding site" evidence="1">
    <location>
        <position position="186"/>
    </location>
    <ligand>
        <name>ATP</name>
        <dbReference type="ChEBI" id="CHEBI:30616"/>
    </ligand>
</feature>
<feature type="binding site" evidence="1">
    <location>
        <position position="223"/>
    </location>
    <ligand>
        <name>ATP</name>
        <dbReference type="ChEBI" id="CHEBI:30616"/>
    </ligand>
</feature>
<feature type="binding site" evidence="1">
    <location>
        <position position="296"/>
    </location>
    <ligand>
        <name>DNA</name>
        <dbReference type="ChEBI" id="CHEBI:16991"/>
    </ligand>
</feature>
<feature type="binding site" evidence="1">
    <location>
        <position position="315"/>
    </location>
    <ligand>
        <name>DNA</name>
        <dbReference type="ChEBI" id="CHEBI:16991"/>
    </ligand>
</feature>
<feature type="binding site" evidence="1">
    <location>
        <position position="320"/>
    </location>
    <ligand>
        <name>DNA</name>
        <dbReference type="ChEBI" id="CHEBI:16991"/>
    </ligand>
</feature>
<reference key="1">
    <citation type="journal article" date="2009" name="Infect. Immun.">
        <title>Comparative genomics reveal extensive transposon-mediated genomic plasticity and diversity among potential effector proteins within the genus Coxiella.</title>
        <authorList>
            <person name="Beare P.A."/>
            <person name="Unsworth N."/>
            <person name="Andoh M."/>
            <person name="Voth D.E."/>
            <person name="Omsland A."/>
            <person name="Gilk S.D."/>
            <person name="Williams K.P."/>
            <person name="Sobral B.W."/>
            <person name="Kupko J.J. III"/>
            <person name="Porcella S.F."/>
            <person name="Samuel J.E."/>
            <person name="Heinzen R.A."/>
        </authorList>
    </citation>
    <scope>NUCLEOTIDE SEQUENCE [LARGE SCALE GENOMIC DNA]</scope>
    <source>
        <strain>CbuK_Q154</strain>
    </source>
</reference>
<comment type="function">
    <text evidence="1">The RuvA-RuvB-RuvC complex processes Holliday junction (HJ) DNA during genetic recombination and DNA repair, while the RuvA-RuvB complex plays an important role in the rescue of blocked DNA replication forks via replication fork reversal (RFR). RuvA specifically binds to HJ cruciform DNA, conferring on it an open structure. The RuvB hexamer acts as an ATP-dependent pump, pulling dsDNA into and through the RuvAB complex. RuvB forms 2 homohexamers on either side of HJ DNA bound by 1 or 2 RuvA tetramers; 4 subunits per hexamer contact DNA at a time. Coordinated motions by a converter formed by DNA-disengaged RuvB subunits stimulates ATP hydrolysis and nucleotide exchange. Immobilization of the converter enables RuvB to convert the ATP-contained energy into a lever motion, pulling 2 nucleotides of DNA out of the RuvA tetramer per ATP hydrolyzed, thus driving DNA branch migration. The RuvB motors rotate together with the DNA substrate, which together with the progressing nucleotide cycle form the mechanistic basis for DNA recombination by continuous HJ branch migration. Branch migration allows RuvC to scan DNA until it finds its consensus sequence, where it cleaves and resolves cruciform DNA.</text>
</comment>
<comment type="catalytic activity">
    <reaction evidence="1">
        <text>ATP + H2O = ADP + phosphate + H(+)</text>
        <dbReference type="Rhea" id="RHEA:13065"/>
        <dbReference type="ChEBI" id="CHEBI:15377"/>
        <dbReference type="ChEBI" id="CHEBI:15378"/>
        <dbReference type="ChEBI" id="CHEBI:30616"/>
        <dbReference type="ChEBI" id="CHEBI:43474"/>
        <dbReference type="ChEBI" id="CHEBI:456216"/>
    </reaction>
</comment>
<comment type="subunit">
    <text evidence="1">Homohexamer. Forms an RuvA(8)-RuvB(12)-Holliday junction (HJ) complex. HJ DNA is sandwiched between 2 RuvA tetramers; dsDNA enters through RuvA and exits via RuvB. An RuvB hexamer assembles on each DNA strand where it exits the tetramer. Each RuvB hexamer is contacted by two RuvA subunits (via domain III) on 2 adjacent RuvB subunits; this complex drives branch migration. In the full resolvosome a probable DNA-RuvA(4)-RuvB(12)-RuvC(2) complex forms which resolves the HJ.</text>
</comment>
<comment type="subcellular location">
    <subcellularLocation>
        <location evidence="1">Cytoplasm</location>
    </subcellularLocation>
</comment>
<comment type="domain">
    <text evidence="1">Has 3 domains, the large (RuvB-L) and small ATPase (RuvB-S) domains and the C-terminal head (RuvB-H) domain. The head domain binds DNA, while the ATPase domains jointly bind ATP, ADP or are empty depending on the state of the subunit in the translocation cycle. During a single DNA translocation step the structure of each domain remains the same, but their relative positions change.</text>
</comment>
<comment type="similarity">
    <text evidence="1">Belongs to the RuvB family.</text>
</comment>
<dbReference type="EC" id="3.6.4.-" evidence="1"/>
<dbReference type="EMBL" id="CP001020">
    <property type="protein sequence ID" value="ACJ20924.1"/>
    <property type="molecule type" value="Genomic_DNA"/>
</dbReference>
<dbReference type="RefSeq" id="WP_005772105.1">
    <property type="nucleotide sequence ID" value="NC_011528.1"/>
</dbReference>
<dbReference type="SMR" id="B6J507"/>
<dbReference type="KEGG" id="cbc:CbuK_1798"/>
<dbReference type="HOGENOM" id="CLU_055599_1_0_6"/>
<dbReference type="GO" id="GO:0005737">
    <property type="term" value="C:cytoplasm"/>
    <property type="evidence" value="ECO:0007669"/>
    <property type="project" value="UniProtKB-SubCell"/>
</dbReference>
<dbReference type="GO" id="GO:0048476">
    <property type="term" value="C:Holliday junction resolvase complex"/>
    <property type="evidence" value="ECO:0007669"/>
    <property type="project" value="UniProtKB-UniRule"/>
</dbReference>
<dbReference type="GO" id="GO:0005524">
    <property type="term" value="F:ATP binding"/>
    <property type="evidence" value="ECO:0007669"/>
    <property type="project" value="UniProtKB-UniRule"/>
</dbReference>
<dbReference type="GO" id="GO:0016887">
    <property type="term" value="F:ATP hydrolysis activity"/>
    <property type="evidence" value="ECO:0007669"/>
    <property type="project" value="InterPro"/>
</dbReference>
<dbReference type="GO" id="GO:0000400">
    <property type="term" value="F:four-way junction DNA binding"/>
    <property type="evidence" value="ECO:0007669"/>
    <property type="project" value="UniProtKB-UniRule"/>
</dbReference>
<dbReference type="GO" id="GO:0009378">
    <property type="term" value="F:four-way junction helicase activity"/>
    <property type="evidence" value="ECO:0007669"/>
    <property type="project" value="InterPro"/>
</dbReference>
<dbReference type="GO" id="GO:0006310">
    <property type="term" value="P:DNA recombination"/>
    <property type="evidence" value="ECO:0007669"/>
    <property type="project" value="UniProtKB-UniRule"/>
</dbReference>
<dbReference type="GO" id="GO:0006281">
    <property type="term" value="P:DNA repair"/>
    <property type="evidence" value="ECO:0007669"/>
    <property type="project" value="UniProtKB-UniRule"/>
</dbReference>
<dbReference type="CDD" id="cd00009">
    <property type="entry name" value="AAA"/>
    <property type="match status" value="1"/>
</dbReference>
<dbReference type="FunFam" id="1.10.8.60:FF:000023">
    <property type="entry name" value="Holliday junction ATP-dependent DNA helicase RuvB"/>
    <property type="match status" value="1"/>
</dbReference>
<dbReference type="FunFam" id="3.40.50.300:FF:000073">
    <property type="entry name" value="Holliday junction ATP-dependent DNA helicase RuvB"/>
    <property type="match status" value="1"/>
</dbReference>
<dbReference type="Gene3D" id="1.10.8.60">
    <property type="match status" value="1"/>
</dbReference>
<dbReference type="Gene3D" id="3.40.50.300">
    <property type="entry name" value="P-loop containing nucleotide triphosphate hydrolases"/>
    <property type="match status" value="1"/>
</dbReference>
<dbReference type="Gene3D" id="1.10.10.10">
    <property type="entry name" value="Winged helix-like DNA-binding domain superfamily/Winged helix DNA-binding domain"/>
    <property type="match status" value="1"/>
</dbReference>
<dbReference type="HAMAP" id="MF_00016">
    <property type="entry name" value="DNA_HJ_migration_RuvB"/>
    <property type="match status" value="1"/>
</dbReference>
<dbReference type="InterPro" id="IPR003593">
    <property type="entry name" value="AAA+_ATPase"/>
</dbReference>
<dbReference type="InterPro" id="IPR041445">
    <property type="entry name" value="AAA_lid_4"/>
</dbReference>
<dbReference type="InterPro" id="IPR004605">
    <property type="entry name" value="DNA_helicase_Holl-junc_RuvB"/>
</dbReference>
<dbReference type="InterPro" id="IPR027417">
    <property type="entry name" value="P-loop_NTPase"/>
</dbReference>
<dbReference type="InterPro" id="IPR008824">
    <property type="entry name" value="RuvB-like_N"/>
</dbReference>
<dbReference type="InterPro" id="IPR008823">
    <property type="entry name" value="RuvB_C"/>
</dbReference>
<dbReference type="InterPro" id="IPR036388">
    <property type="entry name" value="WH-like_DNA-bd_sf"/>
</dbReference>
<dbReference type="InterPro" id="IPR036390">
    <property type="entry name" value="WH_DNA-bd_sf"/>
</dbReference>
<dbReference type="NCBIfam" id="NF000868">
    <property type="entry name" value="PRK00080.1"/>
    <property type="match status" value="1"/>
</dbReference>
<dbReference type="NCBIfam" id="TIGR00635">
    <property type="entry name" value="ruvB"/>
    <property type="match status" value="1"/>
</dbReference>
<dbReference type="PANTHER" id="PTHR42848">
    <property type="match status" value="1"/>
</dbReference>
<dbReference type="PANTHER" id="PTHR42848:SF1">
    <property type="entry name" value="HOLLIDAY JUNCTION BRANCH MIGRATION COMPLEX SUBUNIT RUVB"/>
    <property type="match status" value="1"/>
</dbReference>
<dbReference type="Pfam" id="PF17864">
    <property type="entry name" value="AAA_lid_4"/>
    <property type="match status" value="1"/>
</dbReference>
<dbReference type="Pfam" id="PF05491">
    <property type="entry name" value="RuvB_C"/>
    <property type="match status" value="1"/>
</dbReference>
<dbReference type="Pfam" id="PF05496">
    <property type="entry name" value="RuvB_N"/>
    <property type="match status" value="1"/>
</dbReference>
<dbReference type="SMART" id="SM00382">
    <property type="entry name" value="AAA"/>
    <property type="match status" value="1"/>
</dbReference>
<dbReference type="SUPFAM" id="SSF52540">
    <property type="entry name" value="P-loop containing nucleoside triphosphate hydrolases"/>
    <property type="match status" value="1"/>
</dbReference>
<dbReference type="SUPFAM" id="SSF46785">
    <property type="entry name" value="Winged helix' DNA-binding domain"/>
    <property type="match status" value="1"/>
</dbReference>
<keyword id="KW-0067">ATP-binding</keyword>
<keyword id="KW-0963">Cytoplasm</keyword>
<keyword id="KW-0227">DNA damage</keyword>
<keyword id="KW-0233">DNA recombination</keyword>
<keyword id="KW-0234">DNA repair</keyword>
<keyword id="KW-0238">DNA-binding</keyword>
<keyword id="KW-0378">Hydrolase</keyword>
<keyword id="KW-0547">Nucleotide-binding</keyword>
<evidence type="ECO:0000255" key="1">
    <source>
        <dbReference type="HAMAP-Rule" id="MF_00016"/>
    </source>
</evidence>